<accession>A6Q6E1</accession>
<keyword id="KW-0378">Hydrolase</keyword>
<keyword id="KW-0546">Nucleotide metabolism</keyword>
<keyword id="KW-0547">Nucleotide-binding</keyword>
<feature type="chain" id="PRO_1000009824" description="dCTP deaminase">
    <location>
        <begin position="1"/>
        <end position="188"/>
    </location>
</feature>
<feature type="active site" description="Proton donor/acceptor" evidence="1">
    <location>
        <position position="133"/>
    </location>
</feature>
<feature type="binding site" evidence="1">
    <location>
        <begin position="107"/>
        <end position="112"/>
    </location>
    <ligand>
        <name>dCTP</name>
        <dbReference type="ChEBI" id="CHEBI:61481"/>
    </ligand>
</feature>
<feature type="binding site" evidence="1">
    <location>
        <position position="152"/>
    </location>
    <ligand>
        <name>dCTP</name>
        <dbReference type="ChEBI" id="CHEBI:61481"/>
    </ligand>
</feature>
<feature type="binding site" evidence="1">
    <location>
        <position position="166"/>
    </location>
    <ligand>
        <name>dCTP</name>
        <dbReference type="ChEBI" id="CHEBI:61481"/>
    </ligand>
</feature>
<feature type="binding site" evidence="1">
    <location>
        <position position="176"/>
    </location>
    <ligand>
        <name>dCTP</name>
        <dbReference type="ChEBI" id="CHEBI:61481"/>
    </ligand>
</feature>
<comment type="function">
    <text evidence="1">Catalyzes the deamination of dCTP to dUTP.</text>
</comment>
<comment type="catalytic activity">
    <reaction evidence="1">
        <text>dCTP + H2O + H(+) = dUTP + NH4(+)</text>
        <dbReference type="Rhea" id="RHEA:22680"/>
        <dbReference type="ChEBI" id="CHEBI:15377"/>
        <dbReference type="ChEBI" id="CHEBI:15378"/>
        <dbReference type="ChEBI" id="CHEBI:28938"/>
        <dbReference type="ChEBI" id="CHEBI:61481"/>
        <dbReference type="ChEBI" id="CHEBI:61555"/>
        <dbReference type="EC" id="3.5.4.13"/>
    </reaction>
</comment>
<comment type="pathway">
    <text evidence="1">Pyrimidine metabolism; dUMP biosynthesis; dUMP from dCTP (dUTP route): step 1/2.</text>
</comment>
<comment type="subunit">
    <text evidence="1">Homotrimer.</text>
</comment>
<comment type="similarity">
    <text evidence="1">Belongs to the dCTP deaminase family.</text>
</comment>
<protein>
    <recommendedName>
        <fullName evidence="1">dCTP deaminase</fullName>
        <ecNumber evidence="1">3.5.4.13</ecNumber>
    </recommendedName>
    <alternativeName>
        <fullName evidence="1">Deoxycytidine triphosphate deaminase</fullName>
    </alternativeName>
</protein>
<sequence length="188" mass="20976">MGLKPDKWIREKSLNEAMITPFCEGLVGEGVVSYGLSSYGYDIRVSDEFKIFTNINAEVVDPKDFNENNVVDFKGDICIVPPNSFALARTVEYFRMPKDTLAICLGKSTYARCGIIVNVTPFEPGFEGHITIEISNTTPLPAKIYANEGIAQVLFLEGDEQCETTYSDRKGKYQSQTGITLPRILKQQ</sequence>
<reference key="1">
    <citation type="journal article" date="2007" name="Proc. Natl. Acad. Sci. U.S.A.">
        <title>Deep-sea vent epsilon-proteobacterial genomes provide insights into emergence of pathogens.</title>
        <authorList>
            <person name="Nakagawa S."/>
            <person name="Takaki Y."/>
            <person name="Shimamura S."/>
            <person name="Reysenbach A.-L."/>
            <person name="Takai K."/>
            <person name="Horikoshi K."/>
        </authorList>
    </citation>
    <scope>NUCLEOTIDE SEQUENCE [LARGE SCALE GENOMIC DNA]</scope>
    <source>
        <strain>NBC37-1</strain>
    </source>
</reference>
<dbReference type="EC" id="3.5.4.13" evidence="1"/>
<dbReference type="EMBL" id="AP009179">
    <property type="protein sequence ID" value="BAF71050.1"/>
    <property type="molecule type" value="Genomic_DNA"/>
</dbReference>
<dbReference type="RefSeq" id="WP_011979783.1">
    <property type="nucleotide sequence ID" value="NC_009663.1"/>
</dbReference>
<dbReference type="SMR" id="A6Q6E1"/>
<dbReference type="STRING" id="387093.SUN_0090"/>
<dbReference type="KEGG" id="sun:SUN_0090"/>
<dbReference type="eggNOG" id="COG0717">
    <property type="taxonomic scope" value="Bacteria"/>
</dbReference>
<dbReference type="HOGENOM" id="CLU_087476_4_0_7"/>
<dbReference type="OrthoDB" id="9780956at2"/>
<dbReference type="UniPathway" id="UPA00610">
    <property type="reaction ID" value="UER00665"/>
</dbReference>
<dbReference type="Proteomes" id="UP000006378">
    <property type="component" value="Chromosome"/>
</dbReference>
<dbReference type="GO" id="GO:0008829">
    <property type="term" value="F:dCTP deaminase activity"/>
    <property type="evidence" value="ECO:0007669"/>
    <property type="project" value="UniProtKB-UniRule"/>
</dbReference>
<dbReference type="GO" id="GO:0000166">
    <property type="term" value="F:nucleotide binding"/>
    <property type="evidence" value="ECO:0007669"/>
    <property type="project" value="UniProtKB-KW"/>
</dbReference>
<dbReference type="GO" id="GO:0006226">
    <property type="term" value="P:dUMP biosynthetic process"/>
    <property type="evidence" value="ECO:0007669"/>
    <property type="project" value="UniProtKB-UniPathway"/>
</dbReference>
<dbReference type="GO" id="GO:0006229">
    <property type="term" value="P:dUTP biosynthetic process"/>
    <property type="evidence" value="ECO:0007669"/>
    <property type="project" value="UniProtKB-UniRule"/>
</dbReference>
<dbReference type="GO" id="GO:0015949">
    <property type="term" value="P:nucleobase-containing small molecule interconversion"/>
    <property type="evidence" value="ECO:0007669"/>
    <property type="project" value="TreeGrafter"/>
</dbReference>
<dbReference type="CDD" id="cd07557">
    <property type="entry name" value="trimeric_dUTPase"/>
    <property type="match status" value="1"/>
</dbReference>
<dbReference type="FunFam" id="2.70.40.10:FF:000006">
    <property type="entry name" value="dCTP deaminase"/>
    <property type="match status" value="1"/>
</dbReference>
<dbReference type="Gene3D" id="2.70.40.10">
    <property type="match status" value="1"/>
</dbReference>
<dbReference type="HAMAP" id="MF_00146">
    <property type="entry name" value="dCTP_deaminase"/>
    <property type="match status" value="1"/>
</dbReference>
<dbReference type="InterPro" id="IPR011962">
    <property type="entry name" value="dCTP_deaminase"/>
</dbReference>
<dbReference type="InterPro" id="IPR036157">
    <property type="entry name" value="dUTPase-like_sf"/>
</dbReference>
<dbReference type="InterPro" id="IPR033704">
    <property type="entry name" value="dUTPase_trimeric"/>
</dbReference>
<dbReference type="NCBIfam" id="TIGR02274">
    <property type="entry name" value="dCTP_deam"/>
    <property type="match status" value="1"/>
</dbReference>
<dbReference type="PANTHER" id="PTHR42680">
    <property type="entry name" value="DCTP DEAMINASE"/>
    <property type="match status" value="1"/>
</dbReference>
<dbReference type="PANTHER" id="PTHR42680:SF3">
    <property type="entry name" value="DCTP DEAMINASE"/>
    <property type="match status" value="1"/>
</dbReference>
<dbReference type="Pfam" id="PF22769">
    <property type="entry name" value="DCD"/>
    <property type="match status" value="1"/>
</dbReference>
<dbReference type="SUPFAM" id="SSF51283">
    <property type="entry name" value="dUTPase-like"/>
    <property type="match status" value="1"/>
</dbReference>
<evidence type="ECO:0000255" key="1">
    <source>
        <dbReference type="HAMAP-Rule" id="MF_00146"/>
    </source>
</evidence>
<gene>
    <name evidence="1" type="primary">dcd</name>
    <name type="ordered locus">SUN_0090</name>
</gene>
<name>DCD_SULNB</name>
<organism>
    <name type="scientific">Sulfurovum sp. (strain NBC37-1)</name>
    <dbReference type="NCBI Taxonomy" id="387093"/>
    <lineage>
        <taxon>Bacteria</taxon>
        <taxon>Pseudomonadati</taxon>
        <taxon>Campylobacterota</taxon>
        <taxon>Epsilonproteobacteria</taxon>
        <taxon>Campylobacterales</taxon>
        <taxon>Sulfurovaceae</taxon>
        <taxon>Sulfurovum</taxon>
    </lineage>
</organism>
<proteinExistence type="inferred from homology"/>